<reference key="1">
    <citation type="journal article" date="1997" name="Nature">
        <title>The complete genome sequence of the Gram-positive bacterium Bacillus subtilis.</title>
        <authorList>
            <person name="Kunst F."/>
            <person name="Ogasawara N."/>
            <person name="Moszer I."/>
            <person name="Albertini A.M."/>
            <person name="Alloni G."/>
            <person name="Azevedo V."/>
            <person name="Bertero M.G."/>
            <person name="Bessieres P."/>
            <person name="Bolotin A."/>
            <person name="Borchert S."/>
            <person name="Borriss R."/>
            <person name="Boursier L."/>
            <person name="Brans A."/>
            <person name="Braun M."/>
            <person name="Brignell S.C."/>
            <person name="Bron S."/>
            <person name="Brouillet S."/>
            <person name="Bruschi C.V."/>
            <person name="Caldwell B."/>
            <person name="Capuano V."/>
            <person name="Carter N.M."/>
            <person name="Choi S.-K."/>
            <person name="Codani J.-J."/>
            <person name="Connerton I.F."/>
            <person name="Cummings N.J."/>
            <person name="Daniel R.A."/>
            <person name="Denizot F."/>
            <person name="Devine K.M."/>
            <person name="Duesterhoeft A."/>
            <person name="Ehrlich S.D."/>
            <person name="Emmerson P.T."/>
            <person name="Entian K.-D."/>
            <person name="Errington J."/>
            <person name="Fabret C."/>
            <person name="Ferrari E."/>
            <person name="Foulger D."/>
            <person name="Fritz C."/>
            <person name="Fujita M."/>
            <person name="Fujita Y."/>
            <person name="Fuma S."/>
            <person name="Galizzi A."/>
            <person name="Galleron N."/>
            <person name="Ghim S.-Y."/>
            <person name="Glaser P."/>
            <person name="Goffeau A."/>
            <person name="Golightly E.J."/>
            <person name="Grandi G."/>
            <person name="Guiseppi G."/>
            <person name="Guy B.J."/>
            <person name="Haga K."/>
            <person name="Haiech J."/>
            <person name="Harwood C.R."/>
            <person name="Henaut A."/>
            <person name="Hilbert H."/>
            <person name="Holsappel S."/>
            <person name="Hosono S."/>
            <person name="Hullo M.-F."/>
            <person name="Itaya M."/>
            <person name="Jones L.-M."/>
            <person name="Joris B."/>
            <person name="Karamata D."/>
            <person name="Kasahara Y."/>
            <person name="Klaerr-Blanchard M."/>
            <person name="Klein C."/>
            <person name="Kobayashi Y."/>
            <person name="Koetter P."/>
            <person name="Koningstein G."/>
            <person name="Krogh S."/>
            <person name="Kumano M."/>
            <person name="Kurita K."/>
            <person name="Lapidus A."/>
            <person name="Lardinois S."/>
            <person name="Lauber J."/>
            <person name="Lazarevic V."/>
            <person name="Lee S.-M."/>
            <person name="Levine A."/>
            <person name="Liu H."/>
            <person name="Masuda S."/>
            <person name="Mauel C."/>
            <person name="Medigue C."/>
            <person name="Medina N."/>
            <person name="Mellado R.P."/>
            <person name="Mizuno M."/>
            <person name="Moestl D."/>
            <person name="Nakai S."/>
            <person name="Noback M."/>
            <person name="Noone D."/>
            <person name="O'Reilly M."/>
            <person name="Ogawa K."/>
            <person name="Ogiwara A."/>
            <person name="Oudega B."/>
            <person name="Park S.-H."/>
            <person name="Parro V."/>
            <person name="Pohl T.M."/>
            <person name="Portetelle D."/>
            <person name="Porwollik S."/>
            <person name="Prescott A.M."/>
            <person name="Presecan E."/>
            <person name="Pujic P."/>
            <person name="Purnelle B."/>
            <person name="Rapoport G."/>
            <person name="Rey M."/>
            <person name="Reynolds S."/>
            <person name="Rieger M."/>
            <person name="Rivolta C."/>
            <person name="Rocha E."/>
            <person name="Roche B."/>
            <person name="Rose M."/>
            <person name="Sadaie Y."/>
            <person name="Sato T."/>
            <person name="Scanlan E."/>
            <person name="Schleich S."/>
            <person name="Schroeter R."/>
            <person name="Scoffone F."/>
            <person name="Sekiguchi J."/>
            <person name="Sekowska A."/>
            <person name="Seror S.J."/>
            <person name="Serror P."/>
            <person name="Shin B.-S."/>
            <person name="Soldo B."/>
            <person name="Sorokin A."/>
            <person name="Tacconi E."/>
            <person name="Takagi T."/>
            <person name="Takahashi H."/>
            <person name="Takemaru K."/>
            <person name="Takeuchi M."/>
            <person name="Tamakoshi A."/>
            <person name="Tanaka T."/>
            <person name="Terpstra P."/>
            <person name="Tognoni A."/>
            <person name="Tosato V."/>
            <person name="Uchiyama S."/>
            <person name="Vandenbol M."/>
            <person name="Vannier F."/>
            <person name="Vassarotti A."/>
            <person name="Viari A."/>
            <person name="Wambutt R."/>
            <person name="Wedler E."/>
            <person name="Wedler H."/>
            <person name="Weitzenegger T."/>
            <person name="Winters P."/>
            <person name="Wipat A."/>
            <person name="Yamamoto H."/>
            <person name="Yamane K."/>
            <person name="Yasumoto K."/>
            <person name="Yata K."/>
            <person name="Yoshida K."/>
            <person name="Yoshikawa H.-F."/>
            <person name="Zumstein E."/>
            <person name="Yoshikawa H."/>
            <person name="Danchin A."/>
        </authorList>
    </citation>
    <scope>NUCLEOTIDE SEQUENCE [LARGE SCALE GENOMIC DNA]</scope>
    <source>
        <strain>168</strain>
    </source>
</reference>
<reference key="2">
    <citation type="journal article" date="2010" name="PLoS Genet.">
        <title>The C-terminal domain of the bacterial SSB protein acts as a DNA maintenance hub at active chromosome replication forks.</title>
        <authorList>
            <person name="Costes A."/>
            <person name="Lecointe F."/>
            <person name="McGovern S."/>
            <person name="Quevillon-Cheruel S."/>
            <person name="Polard P."/>
        </authorList>
    </citation>
    <scope>INTERACTION WITH SSBA</scope>
    <scope>SUBCELLULAR LOCATION</scope>
    <source>
        <strain>168</strain>
    </source>
</reference>
<reference key="3">
    <citation type="journal article" date="2014" name="J. Bacteriol.">
        <title>RecD2 helicase limits replication fork stress in Bacillus subtilis.</title>
        <authorList>
            <person name="Walsh B.W."/>
            <person name="Bolz S.A."/>
            <person name="Wessel S.R."/>
            <person name="Schroeder J.W."/>
            <person name="Keck J.L."/>
            <person name="Simmons L.A."/>
        </authorList>
    </citation>
    <scope>FUNCTION</scope>
    <scope>FUNCTION AS A HELICASE</scope>
    <scope>CATALYTIC ACTIVITY</scope>
    <scope>INTERACTION WITH SSBA</scope>
    <scope>DISRUPTION PHENOTYPE</scope>
    <scope>MUTAGENESIS OF LYS-373</scope>
    <source>
        <strain>168 / PY79</strain>
    </source>
</reference>
<reference key="4">
    <citation type="journal article" date="2017" name="DNA Repair">
        <title>Interplay between Bacillus subtilis RecD2 and the RecG or RuvAB helicase in recombinational repair.</title>
        <authorList>
            <person name="Torres R."/>
            <person name="Romero H."/>
            <person name="Rodriguez-Cerrato V."/>
            <person name="Alonso J.C."/>
        </authorList>
    </citation>
    <scope>FUNCTION</scope>
    <scope>DISRUPTION PHENOTYPE</scope>
    <source>
        <strain>168 / YB886 / BG214</strain>
    </source>
</reference>
<reference key="5">
    <citation type="journal article" date="2022" name="Nucleic Acids Res.">
        <title>The RecD2 helicase balances RecA activities.</title>
        <authorList>
            <person name="Ramos C."/>
            <person name="Hernandez-Tamayo R."/>
            <person name="Lopez-Sanz M."/>
            <person name="Carrasco B."/>
            <person name="Serrano E."/>
            <person name="Alonso J.C."/>
            <person name="Graumann P.L."/>
            <person name="Ayora S."/>
        </authorList>
    </citation>
    <scope>FUNCTION AS AN ATPASE</scope>
    <scope>INTERACTION WITH RECA AND SSBA</scope>
    <scope>INDUCTION</scope>
    <scope>DISRUPTION PHENOTYPE</scope>
    <scope>MUTAGENESIS OF LYS-373</scope>
    <source>
        <strain>168 / YB886 / BG214</strain>
    </source>
</reference>
<organism>
    <name type="scientific">Bacillus subtilis (strain 168)</name>
    <dbReference type="NCBI Taxonomy" id="224308"/>
    <lineage>
        <taxon>Bacteria</taxon>
        <taxon>Bacillati</taxon>
        <taxon>Bacillota</taxon>
        <taxon>Bacilli</taxon>
        <taxon>Bacillales</taxon>
        <taxon>Bacillaceae</taxon>
        <taxon>Bacillus</taxon>
    </lineage>
</organism>
<sequence>MQQHPDQLKLEEEPYLKGTVNTVIYHNDTNLYTVLKVKVTETSEAIEDKAVSVTGYFPALQEEETYTFYGKIVTHPKFGLQFQAEHFKKEIPTTKEGIIQYLSSDLFEGIGKKTAEEIVKKLGDSAINKILADASVLYDVPRLSKKKADTLAGALQRHQGLEQIMISLNQFGFGPQLSMKIYQAYESETLEKIQENPYQLVKDVEGIGFGKADELGSRMGLSGNHPERVKAAILYTLETTCLSEGHTYIETEQLIIDTQSLLNQSAREGQRITEMDAANAIIALGENKDIVIEDGRCYFPSLFYAEQNVAKRVKHIASQTEYENQFPESEFLLALGELEERMDVQYAPSQKEAIQKALSSPMLLLTGGPGTGKTTVIRGIVELYGELHGVSLDPSAYKKDEAFPIVLAAPTGRAAKRMSESTGLPAVTIHRLLGWNGAEGFTHTEDQPIEGKLLIIDEASMLDIWLANHLFKAIPDHIQIIIVGDEDQLPSVGPGQVLRDLLASQVIPTVRLTDIYRQAEGSSIVELAHQMKNGLLPNNLTAPTKDRSFIRCGGSQIKEVVEKVVANALKKGYTAKDIQVLAPMYRGKAGINELNVMLQDILNPPKEKRRELKFGDVVYRTGDKILQLVNQPENNVFNGDIGEITSIFYAKENTEKEDMAVVSFDGNEMTFTKKDFNQFTHAYCCSIHKSQGSEFPIVVLPVVKGYYRMLRRNLLYTAITRAKKFLILCGEEEALEWGVKNNDATVRQTSLKNRLSVQVEEMDAELEALQKELPFSVHDANIGMEGITPFDFMKEEQQ</sequence>
<feature type="chain" id="PRO_0000389133" description="ATP-dependent RecD2 DNA helicase">
    <location>
        <begin position="1"/>
        <end position="798"/>
    </location>
</feature>
<feature type="binding site" evidence="1">
    <location>
        <begin position="370"/>
        <end position="374"/>
    </location>
    <ligand>
        <name>ATP</name>
        <dbReference type="ChEBI" id="CHEBI:30616"/>
    </ligand>
</feature>
<feature type="mutagenesis site" description="Loss of 5'-3' helicase activity. No ATPase activity, does not over RecA/RecO replication restart, no longer inhibits DNA replication in vitro." evidence="3 5">
    <original>K</original>
    <variation>A</variation>
    <location>
        <position position="373"/>
    </location>
</feature>
<gene>
    <name evidence="1 6" type="primary">recD2</name>
    <name evidence="9" type="synonym">recDB</name>
    <name evidence="6" type="synonym">yrrC</name>
    <name type="ordered locus">BSU27480</name>
</gene>
<comment type="function">
    <text evidence="1 3 5 8">In vivo may favor replication restart by preventing RecA from binding to blocked replication forks, avoiding unnecessary recombination during replication restart. Acts as a negative modulator of the RecA-ssDNA filament, may dissasemble RecA threads, can act as both a positive and negative regulator of strand exchange (PubMed:35234892). Probably stabilizes or aids normal replication fork progression, is important for survival after treatment with DNA-damaging agents that can result in replication fork stress (PubMed:24443534). Overcomes the inhibition of replication restart by RecA/RecO, probably by displacing RecA (PubMed:35234892). Increasing levels inhibit PriA-dependent DNA replication initiation (but have little effect on ongoing replication) in vitro; may act by disturbing SsbA assembly (PubMed:35234892). Probably has a role in recombinational DNA repair (Probable) (PubMed:28527403). Does not seem to contribute to mismatch repair (PubMed:24443534). Has 5'-3' helicase activity that is probably ATP-dependent (PubMed:24443534).</text>
</comment>
<comment type="catalytic activity">
    <reaction evidence="3">
        <text>Couples ATP hydrolysis with the unwinding of duplex DNA at the replication fork by translocating in the 5'-3' direction. This creates two antiparallel DNA single strands (ssDNA). The leading ssDNA polymer is the template for DNA polymerase III holoenzyme which synthesizes a continuous strand.</text>
        <dbReference type="EC" id="5.6.2.3"/>
    </reaction>
</comment>
<comment type="catalytic activity">
    <reaction evidence="5">
        <text>ATP + H2O = ADP + phosphate + H(+)</text>
        <dbReference type="Rhea" id="RHEA:13065"/>
        <dbReference type="ChEBI" id="CHEBI:15377"/>
        <dbReference type="ChEBI" id="CHEBI:15378"/>
        <dbReference type="ChEBI" id="CHEBI:30616"/>
        <dbReference type="ChEBI" id="CHEBI:43474"/>
        <dbReference type="ChEBI" id="CHEBI:456216"/>
        <dbReference type="EC" id="5.6.2.3"/>
    </reaction>
</comment>
<comment type="subunit">
    <text evidence="2 3 5">Interacts with SSB (sbbA) (PubMed:21170359, PubMed:24443534, PubMed:35234892).</text>
</comment>
<comment type="subcellular location">
    <subcellularLocation>
        <location evidence="2">Cytoplasm</location>
        <location evidence="2">Nucleoid</location>
    </subcellularLocation>
    <text evidence="2">Localizes in tight foci on the nucleoid; targeted to the nucleoid via the 35 C-terminal residues of SSB (ssbA) (PubMed:21170359).</text>
</comment>
<comment type="induction">
    <text evidence="5">Approximately 25 monomers per cell during exponential growth (at protein level) (PubMed:35234892).</text>
</comment>
<comment type="disruption phenotype">
    <text evidence="3 4 5">Replication forks collapse more frequently (PubMed:24443534). A modest (2.8- to 3.6-fold) increase in spontaneous mutation; the mutations observed are not consistent with a mismatch repair defect (PubMed:24443534). Increased sensitivity to mitomycin C (blocks replication by adding bulky N2 adducts), single- and double-stranded breaks generated by phleomycin, alkylating agent methyl methane sulfonate (MMS) and UV damage (PubMed:24443534). Increased sensitivity to MMS (PubMed:28527403, PubMed:35234892). Increased sensitivity to H2O2 (PubMed:28527403). RecD2 is synthetically lethal with recG and with ruvAB (PubMed:28527403). RecA threads persist for a longer time after induction of DNA damage (PubMed:35234892).</text>
</comment>
<comment type="miscellaneous">
    <text>There are no RecB or RecC proteins in this organism.</text>
</comment>
<comment type="miscellaneous">
    <text evidence="3">In B.anthracis it is involved in mismatch repair, in D.radiodurans it is involved in resistance to oxidative damage (PubMed:24443534).</text>
</comment>
<comment type="similarity">
    <text evidence="1">Belongs to the RecD family. RecD2 subfamily.</text>
</comment>
<keyword id="KW-0067">ATP-binding</keyword>
<keyword id="KW-0963">Cytoplasm</keyword>
<keyword id="KW-0238">DNA-binding</keyword>
<keyword id="KW-0347">Helicase</keyword>
<keyword id="KW-0378">Hydrolase</keyword>
<keyword id="KW-0413">Isomerase</keyword>
<keyword id="KW-0547">Nucleotide-binding</keyword>
<keyword id="KW-1185">Reference proteome</keyword>
<proteinExistence type="evidence at protein level"/>
<name>RECD2_BACSU</name>
<accession>O34481</accession>
<dbReference type="EC" id="5.6.2.3" evidence="1 3"/>
<dbReference type="EMBL" id="AL009126">
    <property type="protein sequence ID" value="CAB14689.1"/>
    <property type="molecule type" value="Genomic_DNA"/>
</dbReference>
<dbReference type="PIR" id="A69979">
    <property type="entry name" value="A69979"/>
</dbReference>
<dbReference type="RefSeq" id="NP_390625.1">
    <property type="nucleotide sequence ID" value="NC_000964.3"/>
</dbReference>
<dbReference type="RefSeq" id="WP_004398511.1">
    <property type="nucleotide sequence ID" value="NZ_OZ025638.1"/>
</dbReference>
<dbReference type="SMR" id="O34481"/>
<dbReference type="FunCoup" id="O34481">
    <property type="interactions" value="294"/>
</dbReference>
<dbReference type="STRING" id="224308.BSU27480"/>
<dbReference type="PaxDb" id="224308-BSU27480"/>
<dbReference type="EnsemblBacteria" id="CAB14689">
    <property type="protein sequence ID" value="CAB14689"/>
    <property type="gene ID" value="BSU_27480"/>
</dbReference>
<dbReference type="GeneID" id="937553"/>
<dbReference type="KEGG" id="bsu:BSU27480"/>
<dbReference type="PATRIC" id="fig|224308.179.peg.2986"/>
<dbReference type="eggNOG" id="COG0507">
    <property type="taxonomic scope" value="Bacteria"/>
</dbReference>
<dbReference type="InParanoid" id="O34481"/>
<dbReference type="OrthoDB" id="9803432at2"/>
<dbReference type="PhylomeDB" id="O34481"/>
<dbReference type="BioCyc" id="BSUB:BSU27480-MONOMER"/>
<dbReference type="Proteomes" id="UP000001570">
    <property type="component" value="Chromosome"/>
</dbReference>
<dbReference type="GO" id="GO:0005737">
    <property type="term" value="C:cytoplasm"/>
    <property type="evidence" value="ECO:0007669"/>
    <property type="project" value="UniProtKB-KW"/>
</dbReference>
<dbReference type="GO" id="GO:0009338">
    <property type="term" value="C:exodeoxyribonuclease V complex"/>
    <property type="evidence" value="ECO:0000318"/>
    <property type="project" value="GO_Central"/>
</dbReference>
<dbReference type="GO" id="GO:0009295">
    <property type="term" value="C:nucleoid"/>
    <property type="evidence" value="ECO:0007669"/>
    <property type="project" value="UniProtKB-SubCell"/>
</dbReference>
<dbReference type="GO" id="GO:0043139">
    <property type="term" value="F:5'-3' DNA helicase activity"/>
    <property type="evidence" value="ECO:0000314"/>
    <property type="project" value="UniProtKB"/>
</dbReference>
<dbReference type="GO" id="GO:0005524">
    <property type="term" value="F:ATP binding"/>
    <property type="evidence" value="ECO:0007669"/>
    <property type="project" value="UniProtKB-UniRule"/>
</dbReference>
<dbReference type="GO" id="GO:0016887">
    <property type="term" value="F:ATP hydrolysis activity"/>
    <property type="evidence" value="ECO:0007669"/>
    <property type="project" value="InterPro"/>
</dbReference>
<dbReference type="GO" id="GO:0003677">
    <property type="term" value="F:DNA binding"/>
    <property type="evidence" value="ECO:0007669"/>
    <property type="project" value="UniProtKB-UniRule"/>
</dbReference>
<dbReference type="GO" id="GO:0017116">
    <property type="term" value="F:single-stranded DNA helicase activity"/>
    <property type="evidence" value="ECO:0000318"/>
    <property type="project" value="GO_Central"/>
</dbReference>
<dbReference type="GO" id="GO:0006310">
    <property type="term" value="P:DNA recombination"/>
    <property type="evidence" value="ECO:0000318"/>
    <property type="project" value="GO_Central"/>
</dbReference>
<dbReference type="CDD" id="cd17933">
    <property type="entry name" value="DEXSc_RecD-like"/>
    <property type="match status" value="1"/>
</dbReference>
<dbReference type="CDD" id="cd18809">
    <property type="entry name" value="SF1_C_RecD"/>
    <property type="match status" value="1"/>
</dbReference>
<dbReference type="FunFam" id="2.30.30.940:FF:000002">
    <property type="entry name" value="ATP-dependent RecD-like DNA helicase"/>
    <property type="match status" value="1"/>
</dbReference>
<dbReference type="Gene3D" id="1.10.10.2220">
    <property type="match status" value="1"/>
</dbReference>
<dbReference type="Gene3D" id="2.30.30.940">
    <property type="match status" value="1"/>
</dbReference>
<dbReference type="Gene3D" id="3.40.50.300">
    <property type="entry name" value="P-loop containing nucleotide triphosphate hydrolases"/>
    <property type="match status" value="2"/>
</dbReference>
<dbReference type="HAMAP" id="MF_01488">
    <property type="entry name" value="RecD2"/>
    <property type="match status" value="1"/>
</dbReference>
<dbReference type="InterPro" id="IPR003593">
    <property type="entry name" value="AAA+_ATPase"/>
</dbReference>
<dbReference type="InterPro" id="IPR050534">
    <property type="entry name" value="Coronavir_polyprotein_1ab"/>
</dbReference>
<dbReference type="InterPro" id="IPR027417">
    <property type="entry name" value="P-loop_NTPase"/>
</dbReference>
<dbReference type="InterPro" id="IPR006345">
    <property type="entry name" value="RecD2"/>
</dbReference>
<dbReference type="InterPro" id="IPR029493">
    <property type="entry name" value="RecD2-like_HHH"/>
</dbReference>
<dbReference type="InterPro" id="IPR055446">
    <property type="entry name" value="RecD2_N_OB"/>
</dbReference>
<dbReference type="InterPro" id="IPR041451">
    <property type="entry name" value="RecD2_SH13"/>
</dbReference>
<dbReference type="InterPro" id="IPR027785">
    <property type="entry name" value="UvrD-like_helicase_C"/>
</dbReference>
<dbReference type="NCBIfam" id="TIGR01448">
    <property type="entry name" value="recD_rel"/>
    <property type="match status" value="1"/>
</dbReference>
<dbReference type="PANTHER" id="PTHR43788:SF6">
    <property type="entry name" value="DNA HELICASE B"/>
    <property type="match status" value="1"/>
</dbReference>
<dbReference type="PANTHER" id="PTHR43788">
    <property type="entry name" value="DNA2/NAM7 HELICASE FAMILY MEMBER"/>
    <property type="match status" value="1"/>
</dbReference>
<dbReference type="Pfam" id="PF13604">
    <property type="entry name" value="AAA_30"/>
    <property type="match status" value="1"/>
</dbReference>
<dbReference type="Pfam" id="PF14490">
    <property type="entry name" value="HHH_RecD2"/>
    <property type="match status" value="1"/>
</dbReference>
<dbReference type="Pfam" id="PF23139">
    <property type="entry name" value="OB_YrrC"/>
    <property type="match status" value="1"/>
</dbReference>
<dbReference type="Pfam" id="PF18335">
    <property type="entry name" value="SH3_13"/>
    <property type="match status" value="1"/>
</dbReference>
<dbReference type="Pfam" id="PF13538">
    <property type="entry name" value="UvrD_C_2"/>
    <property type="match status" value="1"/>
</dbReference>
<dbReference type="SMART" id="SM00382">
    <property type="entry name" value="AAA"/>
    <property type="match status" value="1"/>
</dbReference>
<dbReference type="SUPFAM" id="SSF52540">
    <property type="entry name" value="P-loop containing nucleoside triphosphate hydrolases"/>
    <property type="match status" value="1"/>
</dbReference>
<protein>
    <recommendedName>
        <fullName evidence="1">ATP-dependent RecD2 DNA helicase</fullName>
        <ecNumber evidence="1 3">5.6.2.3</ecNumber>
    </recommendedName>
    <alternativeName>
        <fullName evidence="7">DNA 5'-3' helicase RecD2</fullName>
    </alternativeName>
</protein>
<evidence type="ECO:0000255" key="1">
    <source>
        <dbReference type="HAMAP-Rule" id="MF_01488"/>
    </source>
</evidence>
<evidence type="ECO:0000269" key="2">
    <source>
    </source>
</evidence>
<evidence type="ECO:0000269" key="3">
    <source>
    </source>
</evidence>
<evidence type="ECO:0000269" key="4">
    <source>
    </source>
</evidence>
<evidence type="ECO:0000269" key="5">
    <source>
    </source>
</evidence>
<evidence type="ECO:0000303" key="6">
    <source>
    </source>
</evidence>
<evidence type="ECO:0000305" key="7"/>
<evidence type="ECO:0000305" key="8">
    <source>
    </source>
</evidence>
<evidence type="ECO:0000312" key="9">
    <source>
        <dbReference type="EMBL" id="CAB14689.1"/>
    </source>
</evidence>